<proteinExistence type="inferred from homology"/>
<protein>
    <recommendedName>
        <fullName>Nucleoprotein</fullName>
        <shortName>NP</shortName>
    </recommendedName>
    <alternativeName>
        <fullName>Nucleocapsid protein</fullName>
        <shortName>Protein N</shortName>
    </alternativeName>
</protein>
<gene>
    <name type="primary">N</name>
</gene>
<organism>
    <name type="scientific">Rabies virus (strain silver-haired bat-associated)</name>
    <name type="common">RABV</name>
    <name type="synonym">SHBRV</name>
    <dbReference type="NCBI Taxonomy" id="445793"/>
    <lineage>
        <taxon>Viruses</taxon>
        <taxon>Riboviria</taxon>
        <taxon>Orthornavirae</taxon>
        <taxon>Negarnaviricota</taxon>
        <taxon>Haploviricotina</taxon>
        <taxon>Monjiviricetes</taxon>
        <taxon>Mononegavirales</taxon>
        <taxon>Rhabdoviridae</taxon>
        <taxon>Alpharhabdovirinae</taxon>
        <taxon>Lyssavirus</taxon>
        <taxon>Lyssavirus rabies</taxon>
    </lineage>
</organism>
<name>NCAP_RABVB</name>
<organismHost>
    <name type="scientific">Homo sapiens</name>
    <name type="common">Human</name>
    <dbReference type="NCBI Taxonomy" id="9606"/>
</organismHost>
<organismHost>
    <name type="scientific">Mammalia</name>
    <dbReference type="NCBI Taxonomy" id="40674"/>
</organismHost>
<dbReference type="EMBL" id="AY705373">
    <property type="protein sequence ID" value="AAU11515.1"/>
    <property type="molecule type" value="Genomic_RNA"/>
</dbReference>
<dbReference type="SMR" id="Q66T65"/>
<dbReference type="Proteomes" id="UP000006845">
    <property type="component" value="Genome"/>
</dbReference>
<dbReference type="GO" id="GO:0019029">
    <property type="term" value="C:helical viral capsid"/>
    <property type="evidence" value="ECO:0007669"/>
    <property type="project" value="UniProtKB-KW"/>
</dbReference>
<dbReference type="GO" id="GO:0030430">
    <property type="term" value="C:host cell cytoplasm"/>
    <property type="evidence" value="ECO:0007669"/>
    <property type="project" value="UniProtKB-SubCell"/>
</dbReference>
<dbReference type="GO" id="GO:1990904">
    <property type="term" value="C:ribonucleoprotein complex"/>
    <property type="evidence" value="ECO:0007669"/>
    <property type="project" value="UniProtKB-KW"/>
</dbReference>
<dbReference type="GO" id="GO:0019013">
    <property type="term" value="C:viral nucleocapsid"/>
    <property type="evidence" value="ECO:0007669"/>
    <property type="project" value="UniProtKB-KW"/>
</dbReference>
<dbReference type="GO" id="GO:0003723">
    <property type="term" value="F:RNA binding"/>
    <property type="evidence" value="ECO:0007669"/>
    <property type="project" value="UniProtKB-KW"/>
</dbReference>
<dbReference type="Gene3D" id="1.10.3610.10">
    <property type="entry name" value="Nucleoprotein"/>
    <property type="match status" value="1"/>
</dbReference>
<dbReference type="Gene3D" id="1.10.3570.10">
    <property type="entry name" value="Rhabdovirus nucleocapsid protein like domain"/>
    <property type="match status" value="1"/>
</dbReference>
<dbReference type="InterPro" id="IPR000448">
    <property type="entry name" value="Rhabdo_ncapsid"/>
</dbReference>
<dbReference type="InterPro" id="IPR023331">
    <property type="entry name" value="Rhabdovirus_ncapsid_C"/>
</dbReference>
<dbReference type="InterPro" id="IPR023330">
    <property type="entry name" value="Rhabdovirus_ncapsid_N"/>
</dbReference>
<dbReference type="InterPro" id="IPR035961">
    <property type="entry name" value="Rhabdovirus_nucleoprotein-like"/>
</dbReference>
<dbReference type="Pfam" id="PF00945">
    <property type="entry name" value="Rhabdo_ncap"/>
    <property type="match status" value="1"/>
</dbReference>
<dbReference type="SUPFAM" id="SSF140809">
    <property type="entry name" value="Rhabdovirus nucleoprotein-like"/>
    <property type="match status" value="1"/>
</dbReference>
<evidence type="ECO:0000250" key="1"/>
<evidence type="ECO:0000305" key="2"/>
<comment type="function">
    <text evidence="1">Encapsidates the genome in a ratio of one protein N per nine ribonucleotides, protecting it from nucleases. If expressed without protein P it binds non-specifically RNA and therefore can bind it's own mRNA. Interaction with protein P abolishes any non-specific RNA binding, and prevents phosphorylation. The soluble N-P complex encapsidates specifically the genomic RNA, with protein N protecting the genome like a pearl necklace. The encapsidated genomic RNA is termed the nucleocapsid (NC) and serves as template for viral transcription and replication. Protein N binds protein P in the NC through a different interaction, and can be phosphorylated. Subsequent viral replication is dependent on intracellular concentration of newly synthesized protein N. During replication, encapsidation by protein N is coupled to RNA synthesis and all replicative products are resistant to nucleases (By similarity).</text>
</comment>
<comment type="subunit">
    <text evidence="1">Homomultimerizes to form the nucleocapsid. Binds to viral genomic RNA. In nucleocapsid, binds protein P and thereby positions the polymerase on the template. Protein P acts as a chaperone on free protein N to prevent it from aggregation before encapsidating genomic RNA (By similarity).</text>
</comment>
<comment type="subcellular location">
    <subcellularLocation>
        <location>Virion</location>
    </subcellularLocation>
    <subcellularLocation>
        <location evidence="1">Host cytoplasm</location>
    </subcellularLocation>
</comment>
<comment type="PTM">
    <text evidence="1">Phosphorylated by host CK2. Unphosphorylated protein N seems to have a better affinity for leader viral promoter encapsidation. Phosphorylation of protein N in ribonucleocapsid may stabilize the interaction with protein P, thereby playing an important role in viral transcription/replication (By similarity).</text>
</comment>
<comment type="miscellaneous">
    <text evidence="1">Displays a superantigen activity in human and mouse, activating mostly V-beta-8 subtypes of T-cell receptor.</text>
</comment>
<comment type="similarity">
    <text evidence="2">Belongs to the lyssavirus nucleocapsid protein family.</text>
</comment>
<sequence length="450" mass="50864">MDADKIVFKVKNQVVSLKPEIIVDQYEYKYPAIKDSRKPSITLGKAPDLNKAYKSILSGMNAAKLDPDDVCSYLAAAMQFFEGACPDDWVSYGIMIARRGDKITPNSLVDIRRTNVEGNWALTGGMELTRDPTVPEHASLVGLLLSLYRLSKISGQNTGNYKTNIADRIEQIFETAPFVKIVEHHTLMTTHKMCANWSTIPNFRFLAGTYDMFFSRIEHLYSAIRVGTVVTAYEDCSGLVSFTGFIKQINLTAREALLYFFHKNFEEEIRRMFEPGQETAIPHSYFIHFRSLGLSGKSPYSSNAIGHVFNLIHFVGCYMGQVRSLNATVIATCAPHEMSVLGGYLGEEFFGKGTFERRFFRDEKELQEYEAAELTKTEMALADDGTVNSDDEDYFSSETRSPEAVYTRIMMNGGRLKRSHIRRYVSVSSNHQARPNSFAEFLNKTYSSDS</sequence>
<accession>Q66T65</accession>
<feature type="chain" id="PRO_0000295206" description="Nucleoprotein">
    <location>
        <begin position="1"/>
        <end position="450"/>
    </location>
</feature>
<feature type="modified residue" description="Phosphoserine; by host CK2" evidence="1">
    <location>
        <position position="389"/>
    </location>
</feature>
<keyword id="KW-0167">Capsid protein</keyword>
<keyword id="KW-1139">Helical capsid protein</keyword>
<keyword id="KW-1035">Host cytoplasm</keyword>
<keyword id="KW-0597">Phosphoprotein</keyword>
<keyword id="KW-0687">Ribonucleoprotein</keyword>
<keyword id="KW-0694">RNA-binding</keyword>
<keyword id="KW-0766">Superantigen</keyword>
<keyword id="KW-0543">Viral nucleoprotein</keyword>
<keyword id="KW-0946">Virion</keyword>
<reference key="1">
    <citation type="journal article" date="2004" name="Proc. Natl. Acad. Sci. U.S.A.">
        <title>Identification of viral genomic elements responsible for rabies virus neuroinvasiveness.</title>
        <authorList>
            <person name="Faber M."/>
            <person name="Pulmanausahakul R."/>
            <person name="Nagao K."/>
            <person name="Prosniak M."/>
            <person name="Rice A.B."/>
            <person name="Koprowski H."/>
            <person name="Schnell M.J."/>
            <person name="Dietzschold B."/>
        </authorList>
    </citation>
    <scope>NUCLEOTIDE SEQUENCE [GENOMIC RNA]</scope>
</reference>